<dbReference type="EC" id="6.3.4.20" evidence="1"/>
<dbReference type="EMBL" id="CP000786">
    <property type="protein sequence ID" value="ABZ96320.1"/>
    <property type="molecule type" value="Genomic_DNA"/>
</dbReference>
<dbReference type="RefSeq" id="WP_012387209.1">
    <property type="nucleotide sequence ID" value="NC_010602.1"/>
</dbReference>
<dbReference type="SMR" id="B0SK77"/>
<dbReference type="STRING" id="456481.LEPBI_I0175"/>
<dbReference type="KEGG" id="lbi:LEPBI_I0175"/>
<dbReference type="HOGENOM" id="CLU_081854_1_1_12"/>
<dbReference type="OrthoDB" id="9789567at2"/>
<dbReference type="BioCyc" id="LBIF456481:LEPBI_RS00860-MONOMER"/>
<dbReference type="UniPathway" id="UPA00391"/>
<dbReference type="Proteomes" id="UP000001847">
    <property type="component" value="Chromosome I"/>
</dbReference>
<dbReference type="GO" id="GO:0005524">
    <property type="term" value="F:ATP binding"/>
    <property type="evidence" value="ECO:0007669"/>
    <property type="project" value="UniProtKB-UniRule"/>
</dbReference>
<dbReference type="GO" id="GO:0016879">
    <property type="term" value="F:ligase activity, forming carbon-nitrogen bonds"/>
    <property type="evidence" value="ECO:0007669"/>
    <property type="project" value="UniProtKB-UniRule"/>
</dbReference>
<dbReference type="GO" id="GO:0008270">
    <property type="term" value="F:zinc ion binding"/>
    <property type="evidence" value="ECO:0007669"/>
    <property type="project" value="UniProtKB-UniRule"/>
</dbReference>
<dbReference type="GO" id="GO:0008616">
    <property type="term" value="P:queuosine biosynthetic process"/>
    <property type="evidence" value="ECO:0007669"/>
    <property type="project" value="UniProtKB-UniRule"/>
</dbReference>
<dbReference type="CDD" id="cd01995">
    <property type="entry name" value="QueC-like"/>
    <property type="match status" value="1"/>
</dbReference>
<dbReference type="Gene3D" id="3.40.50.620">
    <property type="entry name" value="HUPs"/>
    <property type="match status" value="1"/>
</dbReference>
<dbReference type="HAMAP" id="MF_01633">
    <property type="entry name" value="QueC"/>
    <property type="match status" value="1"/>
</dbReference>
<dbReference type="InterPro" id="IPR018317">
    <property type="entry name" value="QueC"/>
</dbReference>
<dbReference type="InterPro" id="IPR014729">
    <property type="entry name" value="Rossmann-like_a/b/a_fold"/>
</dbReference>
<dbReference type="NCBIfam" id="TIGR00364">
    <property type="entry name" value="7-cyano-7-deazaguanine synthase QueC"/>
    <property type="match status" value="1"/>
</dbReference>
<dbReference type="PANTHER" id="PTHR42914">
    <property type="entry name" value="7-CYANO-7-DEAZAGUANINE SYNTHASE"/>
    <property type="match status" value="1"/>
</dbReference>
<dbReference type="PANTHER" id="PTHR42914:SF1">
    <property type="entry name" value="7-CYANO-7-DEAZAGUANINE SYNTHASE"/>
    <property type="match status" value="1"/>
</dbReference>
<dbReference type="Pfam" id="PF06508">
    <property type="entry name" value="QueC"/>
    <property type="match status" value="1"/>
</dbReference>
<dbReference type="PIRSF" id="PIRSF006293">
    <property type="entry name" value="ExsB"/>
    <property type="match status" value="1"/>
</dbReference>
<dbReference type="SUPFAM" id="SSF52402">
    <property type="entry name" value="Adenine nucleotide alpha hydrolases-like"/>
    <property type="match status" value="1"/>
</dbReference>
<name>QUEC_LEPBP</name>
<sequence>MVSILDSSFKSKTEKKGAIVLLSGGLDSTTCLYLAAKDFGYPKNKKLPLLALSFDYSQKHKIELTKSKKIAKTLGIKHVIQKLDPGFFLGSSLTESKIKVRKNAKSLFSGDETEIPNTYVPGRNILFLSFALSLAEGHGYDSIYIGVNALDYSGYPDCRPEFIDSFQKMANLGTKKGVSGTGDSIQIKTPLLHLGKKEIIELGMSVGAPLGLTHSCYDPVSGKPCGKCDSCILRAKGFLEVGLKDPAL</sequence>
<reference key="1">
    <citation type="journal article" date="2008" name="PLoS ONE">
        <title>Genome sequence of the saprophyte Leptospira biflexa provides insights into the evolution of Leptospira and the pathogenesis of leptospirosis.</title>
        <authorList>
            <person name="Picardeau M."/>
            <person name="Bulach D.M."/>
            <person name="Bouchier C."/>
            <person name="Zuerner R.L."/>
            <person name="Zidane N."/>
            <person name="Wilson P.J."/>
            <person name="Creno S."/>
            <person name="Kuczek E.S."/>
            <person name="Bommezzadri S."/>
            <person name="Davis J.C."/>
            <person name="McGrath A."/>
            <person name="Johnson M.J."/>
            <person name="Boursaux-Eude C."/>
            <person name="Seemann T."/>
            <person name="Rouy Z."/>
            <person name="Coppel R.L."/>
            <person name="Rood J.I."/>
            <person name="Lajus A."/>
            <person name="Davies J.K."/>
            <person name="Medigue C."/>
            <person name="Adler B."/>
        </authorList>
    </citation>
    <scope>NUCLEOTIDE SEQUENCE [LARGE SCALE GENOMIC DNA]</scope>
    <source>
        <strain>Patoc 1 / ATCC 23582 / Paris</strain>
    </source>
</reference>
<keyword id="KW-0067">ATP-binding</keyword>
<keyword id="KW-0436">Ligase</keyword>
<keyword id="KW-0479">Metal-binding</keyword>
<keyword id="KW-0547">Nucleotide-binding</keyword>
<keyword id="KW-0671">Queuosine biosynthesis</keyword>
<keyword id="KW-1185">Reference proteome</keyword>
<keyword id="KW-0862">Zinc</keyword>
<protein>
    <recommendedName>
        <fullName evidence="1">7-cyano-7-deazaguanine synthase</fullName>
        <ecNumber evidence="1">6.3.4.20</ecNumber>
    </recommendedName>
    <alternativeName>
        <fullName evidence="1">7-cyano-7-carbaguanine synthase</fullName>
    </alternativeName>
    <alternativeName>
        <fullName evidence="1">PreQ(0) synthase</fullName>
    </alternativeName>
    <alternativeName>
        <fullName evidence="1">Queuosine biosynthesis protein QueC</fullName>
    </alternativeName>
</protein>
<evidence type="ECO:0000255" key="1">
    <source>
        <dbReference type="HAMAP-Rule" id="MF_01633"/>
    </source>
</evidence>
<gene>
    <name evidence="1" type="primary">queC</name>
    <name type="ordered locus">LEPBI_I0175</name>
</gene>
<feature type="chain" id="PRO_1000186609" description="7-cyano-7-deazaguanine synthase">
    <location>
        <begin position="1"/>
        <end position="248"/>
    </location>
</feature>
<feature type="binding site" evidence="1">
    <location>
        <begin position="22"/>
        <end position="32"/>
    </location>
    <ligand>
        <name>ATP</name>
        <dbReference type="ChEBI" id="CHEBI:30616"/>
    </ligand>
</feature>
<feature type="binding site" evidence="1">
    <location>
        <position position="216"/>
    </location>
    <ligand>
        <name>Zn(2+)</name>
        <dbReference type="ChEBI" id="CHEBI:29105"/>
    </ligand>
</feature>
<feature type="binding site" evidence="1">
    <location>
        <position position="225"/>
    </location>
    <ligand>
        <name>Zn(2+)</name>
        <dbReference type="ChEBI" id="CHEBI:29105"/>
    </ligand>
</feature>
<feature type="binding site" evidence="1">
    <location>
        <position position="228"/>
    </location>
    <ligand>
        <name>Zn(2+)</name>
        <dbReference type="ChEBI" id="CHEBI:29105"/>
    </ligand>
</feature>
<feature type="binding site" evidence="1">
    <location>
        <position position="231"/>
    </location>
    <ligand>
        <name>Zn(2+)</name>
        <dbReference type="ChEBI" id="CHEBI:29105"/>
    </ligand>
</feature>
<organism>
    <name type="scientific">Leptospira biflexa serovar Patoc (strain Patoc 1 / ATCC 23582 / Paris)</name>
    <dbReference type="NCBI Taxonomy" id="456481"/>
    <lineage>
        <taxon>Bacteria</taxon>
        <taxon>Pseudomonadati</taxon>
        <taxon>Spirochaetota</taxon>
        <taxon>Spirochaetia</taxon>
        <taxon>Leptospirales</taxon>
        <taxon>Leptospiraceae</taxon>
        <taxon>Leptospira</taxon>
    </lineage>
</organism>
<comment type="function">
    <text evidence="1">Catalyzes the ATP-dependent conversion of 7-carboxy-7-deazaguanine (CDG) to 7-cyano-7-deazaguanine (preQ(0)).</text>
</comment>
<comment type="catalytic activity">
    <reaction evidence="1">
        <text>7-carboxy-7-deazaguanine + NH4(+) + ATP = 7-cyano-7-deazaguanine + ADP + phosphate + H2O + H(+)</text>
        <dbReference type="Rhea" id="RHEA:27982"/>
        <dbReference type="ChEBI" id="CHEBI:15377"/>
        <dbReference type="ChEBI" id="CHEBI:15378"/>
        <dbReference type="ChEBI" id="CHEBI:28938"/>
        <dbReference type="ChEBI" id="CHEBI:30616"/>
        <dbReference type="ChEBI" id="CHEBI:43474"/>
        <dbReference type="ChEBI" id="CHEBI:45075"/>
        <dbReference type="ChEBI" id="CHEBI:61036"/>
        <dbReference type="ChEBI" id="CHEBI:456216"/>
        <dbReference type="EC" id="6.3.4.20"/>
    </reaction>
</comment>
<comment type="cofactor">
    <cofactor evidence="1">
        <name>Zn(2+)</name>
        <dbReference type="ChEBI" id="CHEBI:29105"/>
    </cofactor>
    <text evidence="1">Binds 1 zinc ion per subunit.</text>
</comment>
<comment type="pathway">
    <text evidence="1">Purine metabolism; 7-cyano-7-deazaguanine biosynthesis.</text>
</comment>
<comment type="similarity">
    <text evidence="1">Belongs to the QueC family.</text>
</comment>
<accession>B0SK77</accession>
<proteinExistence type="inferred from homology"/>